<accession>Q2JS99</accession>
<sequence length="35" mass="3535">MASEIFTIAGLSIVLTLVGVALGYGILRITQGGAE</sequence>
<keyword id="KW-0249">Electron transport</keyword>
<keyword id="KW-0472">Membrane</keyword>
<keyword id="KW-0602">Photosynthesis</keyword>
<keyword id="KW-0793">Thylakoid</keyword>
<keyword id="KW-0812">Transmembrane</keyword>
<keyword id="KW-1133">Transmembrane helix</keyword>
<keyword id="KW-0813">Transport</keyword>
<dbReference type="EMBL" id="CP000239">
    <property type="protein sequence ID" value="ABD00483.1"/>
    <property type="molecule type" value="Genomic_DNA"/>
</dbReference>
<dbReference type="RefSeq" id="WP_011431156.1">
    <property type="nucleotide sequence ID" value="NC_007775.1"/>
</dbReference>
<dbReference type="SMR" id="Q2JS99"/>
<dbReference type="STRING" id="321327.CYA_2357"/>
<dbReference type="KEGG" id="cya:CYA_2357"/>
<dbReference type="eggNOG" id="ENOG50319JF">
    <property type="taxonomic scope" value="Bacteria"/>
</dbReference>
<dbReference type="HOGENOM" id="CLU_216743_3_0_3"/>
<dbReference type="OrthoDB" id="561129at2"/>
<dbReference type="Proteomes" id="UP000008818">
    <property type="component" value="Chromosome"/>
</dbReference>
<dbReference type="GO" id="GO:0009512">
    <property type="term" value="C:cytochrome b6f complex"/>
    <property type="evidence" value="ECO:0007669"/>
    <property type="project" value="InterPro"/>
</dbReference>
<dbReference type="GO" id="GO:0031676">
    <property type="term" value="C:plasma membrane-derived thylakoid membrane"/>
    <property type="evidence" value="ECO:0007669"/>
    <property type="project" value="UniProtKB-SubCell"/>
</dbReference>
<dbReference type="GO" id="GO:0009055">
    <property type="term" value="F:electron transfer activity"/>
    <property type="evidence" value="ECO:0007669"/>
    <property type="project" value="UniProtKB-UniRule"/>
</dbReference>
<dbReference type="GO" id="GO:0015979">
    <property type="term" value="P:photosynthesis"/>
    <property type="evidence" value="ECO:0007669"/>
    <property type="project" value="UniProtKB-KW"/>
</dbReference>
<dbReference type="HAMAP" id="MF_00396">
    <property type="entry name" value="Cytb6_f_PetM"/>
    <property type="match status" value="1"/>
</dbReference>
<dbReference type="InterPro" id="IPR012595">
    <property type="entry name" value="PetM_cyt_b6/f_cplx_su7"/>
</dbReference>
<dbReference type="Pfam" id="PF08041">
    <property type="entry name" value="PetM"/>
    <property type="match status" value="1"/>
</dbReference>
<dbReference type="SUPFAM" id="SSF103441">
    <property type="entry name" value="PetM subunit of the cytochrome b6f complex"/>
    <property type="match status" value="1"/>
</dbReference>
<reference key="1">
    <citation type="journal article" date="2007" name="ISME J.">
        <title>Population level functional diversity in a microbial community revealed by comparative genomic and metagenomic analyses.</title>
        <authorList>
            <person name="Bhaya D."/>
            <person name="Grossman A.R."/>
            <person name="Steunou A.-S."/>
            <person name="Khuri N."/>
            <person name="Cohan F.M."/>
            <person name="Hamamura N."/>
            <person name="Melendrez M.C."/>
            <person name="Bateson M.M."/>
            <person name="Ward D.M."/>
            <person name="Heidelberg J.F."/>
        </authorList>
    </citation>
    <scope>NUCLEOTIDE SEQUENCE [LARGE SCALE GENOMIC DNA]</scope>
    <source>
        <strain>JA-3-3Ab</strain>
    </source>
</reference>
<name>PETM_SYNJA</name>
<feature type="chain" id="PRO_1000049589" description="Cytochrome b6-f complex subunit 7">
    <location>
        <begin position="1"/>
        <end position="35"/>
    </location>
</feature>
<feature type="transmembrane region" description="Helical" evidence="1">
    <location>
        <begin position="9"/>
        <end position="27"/>
    </location>
</feature>
<proteinExistence type="inferred from homology"/>
<comment type="function">
    <text evidence="1">Component of the cytochrome b6-f complex, which mediates electron transfer between photosystem II (PSII) and photosystem I (PSI), cyclic electron flow around PSI, and state transitions.</text>
</comment>
<comment type="subunit">
    <text evidence="1">The 4 large subunits of the cytochrome b6-f complex are cytochrome b6, subunit IV (17 kDa polypeptide, PetD), cytochrome f and the Rieske protein, while the 4 small subunits are PetG, PetL, PetM and PetN. The complex functions as a dimer.</text>
</comment>
<comment type="subcellular location">
    <subcellularLocation>
        <location evidence="1">Cellular thylakoid membrane</location>
        <topology evidence="1">Single-pass membrane protein</topology>
    </subcellularLocation>
</comment>
<comment type="similarity">
    <text evidence="1">Belongs to the PetM family.</text>
</comment>
<organism>
    <name type="scientific">Synechococcus sp. (strain JA-3-3Ab)</name>
    <name type="common">Cyanobacteria bacterium Yellowstone A-Prime</name>
    <dbReference type="NCBI Taxonomy" id="321327"/>
    <lineage>
        <taxon>Bacteria</taxon>
        <taxon>Bacillati</taxon>
        <taxon>Cyanobacteriota</taxon>
        <taxon>Cyanophyceae</taxon>
        <taxon>Synechococcales</taxon>
        <taxon>Synechococcaceae</taxon>
        <taxon>Synechococcus</taxon>
    </lineage>
</organism>
<protein>
    <recommendedName>
        <fullName evidence="1">Cytochrome b6-f complex subunit 7</fullName>
    </recommendedName>
    <alternativeName>
        <fullName evidence="1">Cytochrome b6-f complex subunit PetM</fullName>
    </alternativeName>
    <alternativeName>
        <fullName evidence="1">Cytochrome b6-f complex subunit VII</fullName>
    </alternativeName>
</protein>
<evidence type="ECO:0000255" key="1">
    <source>
        <dbReference type="HAMAP-Rule" id="MF_00396"/>
    </source>
</evidence>
<gene>
    <name evidence="1" type="primary">petM</name>
    <name type="ordered locus">CYA_2357</name>
</gene>